<reference key="1">
    <citation type="submission" date="2006-08" db="EMBL/GenBank/DDBJ databases">
        <authorList>
            <consortium name="NIH - Mammalian Gene Collection (MGC) project"/>
        </authorList>
    </citation>
    <scope>NUCLEOTIDE SEQUENCE [LARGE SCALE MRNA]</scope>
    <source>
        <strain>Hereford</strain>
        <tissue>Brain cortex</tissue>
    </source>
</reference>
<evidence type="ECO:0000250" key="1"/>
<evidence type="ECO:0000250" key="2">
    <source>
        <dbReference type="UniProtKB" id="P35802"/>
    </source>
</evidence>
<evidence type="ECO:0000250" key="3">
    <source>
        <dbReference type="UniProtKB" id="P51674"/>
    </source>
</evidence>
<evidence type="ECO:0000250" key="4">
    <source>
        <dbReference type="UniProtKB" id="Q812E9"/>
    </source>
</evidence>
<evidence type="ECO:0000255" key="5"/>
<evidence type="ECO:0000305" key="6"/>
<keyword id="KW-0007">Acetylation</keyword>
<keyword id="KW-1003">Cell membrane</keyword>
<keyword id="KW-0966">Cell projection</keyword>
<keyword id="KW-1015">Disulfide bond</keyword>
<keyword id="KW-0325">Glycoprotein</keyword>
<keyword id="KW-0449">Lipoprotein</keyword>
<keyword id="KW-0472">Membrane</keyword>
<keyword id="KW-0524">Neurogenesis</keyword>
<keyword id="KW-0564">Palmitate</keyword>
<keyword id="KW-0597">Phosphoprotein</keyword>
<keyword id="KW-1185">Reference proteome</keyword>
<keyword id="KW-0770">Synapse</keyword>
<keyword id="KW-0812">Transmembrane</keyword>
<keyword id="KW-1133">Transmembrane helix</keyword>
<organism>
    <name type="scientific">Bos taurus</name>
    <name type="common">Bovine</name>
    <dbReference type="NCBI Taxonomy" id="9913"/>
    <lineage>
        <taxon>Eukaryota</taxon>
        <taxon>Metazoa</taxon>
        <taxon>Chordata</taxon>
        <taxon>Craniata</taxon>
        <taxon>Vertebrata</taxon>
        <taxon>Euteleostomi</taxon>
        <taxon>Mammalia</taxon>
        <taxon>Eutheria</taxon>
        <taxon>Laurasiatheria</taxon>
        <taxon>Artiodactyla</taxon>
        <taxon>Ruminantia</taxon>
        <taxon>Pecora</taxon>
        <taxon>Bovidae</taxon>
        <taxon>Bovinae</taxon>
        <taxon>Bos</taxon>
    </lineage>
</organism>
<accession>Q0VD07</accession>
<sequence length="278" mass="31210">MEENMEEGQTQKGCFECCIKCLGGIPYASLIATILLYAGVALFCGCGHEALSGTVNILQTYFEMARTAGDTLDVFTMIDIFKYVIYGIAAAFFVYGILLMVEGFFTTGAIKDLYGDFKITTCGRCVSAWFIMLTYLFMLAWLGVTAFTSLPVYMYFNLWTICRNTTLVEGANLCLDLRQFGIVTIGEEKKICTVSENFLRMCESTELNMTFHLFIVALAGAGAAVIAMVHYLMVLSANWAYVKDACRMQKYEDIKSKEEQELHDIHSTRSKERLNAYT</sequence>
<feature type="chain" id="PRO_0000283789" description="Neuronal membrane glycoprotein M6-a">
    <location>
        <begin position="1"/>
        <end position="278"/>
    </location>
</feature>
<feature type="topological domain" description="Cytoplasmic" evidence="5">
    <location>
        <begin position="1"/>
        <end position="22"/>
    </location>
</feature>
<feature type="transmembrane region" description="Helical" evidence="5">
    <location>
        <begin position="23"/>
        <end position="43"/>
    </location>
</feature>
<feature type="topological domain" description="Extracellular" evidence="5">
    <location>
        <begin position="44"/>
        <end position="84"/>
    </location>
</feature>
<feature type="transmembrane region" description="Helical" evidence="5">
    <location>
        <begin position="85"/>
        <end position="105"/>
    </location>
</feature>
<feature type="topological domain" description="Cytoplasmic" evidence="5">
    <location>
        <begin position="106"/>
        <end position="127"/>
    </location>
</feature>
<feature type="transmembrane region" description="Helical" evidence="5">
    <location>
        <begin position="128"/>
        <end position="148"/>
    </location>
</feature>
<feature type="topological domain" description="Extracellular" evidence="1">
    <location>
        <begin position="149"/>
        <end position="213"/>
    </location>
</feature>
<feature type="transmembrane region" description="Helical" evidence="5">
    <location>
        <begin position="214"/>
        <end position="234"/>
    </location>
</feature>
<feature type="topological domain" description="Cytoplasmic" evidence="5">
    <location>
        <begin position="235"/>
        <end position="278"/>
    </location>
</feature>
<feature type="modified residue" description="N-acetylmethionine" evidence="3">
    <location>
        <position position="1"/>
    </location>
</feature>
<feature type="modified residue" description="Phosphoserine" evidence="2">
    <location>
        <position position="256"/>
    </location>
</feature>
<feature type="modified residue" description="Phosphothreonine" evidence="4">
    <location>
        <position position="278"/>
    </location>
</feature>
<feature type="glycosylation site" description="N-linked (GlcNAc...) asparagine" evidence="5">
    <location>
        <position position="164"/>
    </location>
</feature>
<feature type="glycosylation site" description="N-linked (GlcNAc...) asparagine" evidence="5">
    <location>
        <position position="208"/>
    </location>
</feature>
<feature type="disulfide bond" evidence="1">
    <location>
        <begin position="174"/>
        <end position="192"/>
    </location>
</feature>
<gene>
    <name type="primary">GPM6A</name>
</gene>
<dbReference type="EMBL" id="BC119902">
    <property type="protein sequence ID" value="AAI19903.1"/>
    <property type="molecule type" value="mRNA"/>
</dbReference>
<dbReference type="RefSeq" id="NP_001068777.1">
    <property type="nucleotide sequence ID" value="NM_001075309.1"/>
</dbReference>
<dbReference type="FunCoup" id="Q0VD07">
    <property type="interactions" value="855"/>
</dbReference>
<dbReference type="STRING" id="9913.ENSBTAP00000005543"/>
<dbReference type="GlyCosmos" id="Q0VD07">
    <property type="glycosylation" value="2 sites, No reported glycans"/>
</dbReference>
<dbReference type="GlyGen" id="Q0VD07">
    <property type="glycosylation" value="2 sites"/>
</dbReference>
<dbReference type="Ensembl" id="ENSBTAT00000005543.5">
    <property type="protein sequence ID" value="ENSBTAP00000005543.5"/>
    <property type="gene ID" value="ENSBTAG00000004231.6"/>
</dbReference>
<dbReference type="GeneID" id="507389"/>
<dbReference type="KEGG" id="bta:507389"/>
<dbReference type="CTD" id="2823"/>
<dbReference type="VEuPathDB" id="HostDB:ENSBTAG00000004231"/>
<dbReference type="VGNC" id="VGNC:97275">
    <property type="gene designation" value="GPM6A"/>
</dbReference>
<dbReference type="GeneTree" id="ENSGT00390000006915"/>
<dbReference type="InParanoid" id="Q0VD07"/>
<dbReference type="OMA" id="CTLNENF"/>
<dbReference type="OrthoDB" id="9993736at2759"/>
<dbReference type="Proteomes" id="UP000009136">
    <property type="component" value="Chromosome 27"/>
</dbReference>
<dbReference type="Bgee" id="ENSBTAG00000004231">
    <property type="expression patterns" value="Expressed in occipital lobe and 100 other cell types or tissues"/>
</dbReference>
<dbReference type="GO" id="GO:0044295">
    <property type="term" value="C:axonal growth cone"/>
    <property type="evidence" value="ECO:0000250"/>
    <property type="project" value="UniProtKB"/>
</dbReference>
<dbReference type="GO" id="GO:0043197">
    <property type="term" value="C:dendritic spine"/>
    <property type="evidence" value="ECO:0007669"/>
    <property type="project" value="UniProtKB-SubCell"/>
</dbReference>
<dbReference type="GO" id="GO:0030175">
    <property type="term" value="C:filopodium"/>
    <property type="evidence" value="ECO:0000250"/>
    <property type="project" value="UniProtKB"/>
</dbReference>
<dbReference type="GO" id="GO:0043005">
    <property type="term" value="C:neuron projection"/>
    <property type="evidence" value="ECO:0000250"/>
    <property type="project" value="UniProtKB"/>
</dbReference>
<dbReference type="GO" id="GO:0043025">
    <property type="term" value="C:neuronal cell body"/>
    <property type="evidence" value="ECO:0000250"/>
    <property type="project" value="UniProtKB"/>
</dbReference>
<dbReference type="GO" id="GO:0005886">
    <property type="term" value="C:plasma membrane"/>
    <property type="evidence" value="ECO:0000250"/>
    <property type="project" value="UniProtKB"/>
</dbReference>
<dbReference type="GO" id="GO:0003407">
    <property type="term" value="P:neural retina development"/>
    <property type="evidence" value="ECO:0000250"/>
    <property type="project" value="UniProtKB"/>
</dbReference>
<dbReference type="GO" id="GO:0001764">
    <property type="term" value="P:neuron migration"/>
    <property type="evidence" value="ECO:0000250"/>
    <property type="project" value="UniProtKB"/>
</dbReference>
<dbReference type="GO" id="GO:0031175">
    <property type="term" value="P:neuron projection development"/>
    <property type="evidence" value="ECO:0000318"/>
    <property type="project" value="GO_Central"/>
</dbReference>
<dbReference type="GO" id="GO:0048812">
    <property type="term" value="P:neuron projection morphogenesis"/>
    <property type="evidence" value="ECO:0000250"/>
    <property type="project" value="UniProtKB"/>
</dbReference>
<dbReference type="GO" id="GO:0051491">
    <property type="term" value="P:positive regulation of filopodium assembly"/>
    <property type="evidence" value="ECO:0000250"/>
    <property type="project" value="UniProtKB"/>
</dbReference>
<dbReference type="GO" id="GO:0048863">
    <property type="term" value="P:stem cell differentiation"/>
    <property type="evidence" value="ECO:0000250"/>
    <property type="project" value="UniProtKB"/>
</dbReference>
<dbReference type="GO" id="GO:0007416">
    <property type="term" value="P:synapse assembly"/>
    <property type="evidence" value="ECO:0000250"/>
    <property type="project" value="UniProtKB"/>
</dbReference>
<dbReference type="InterPro" id="IPR001614">
    <property type="entry name" value="Myelin_PLP"/>
</dbReference>
<dbReference type="InterPro" id="IPR018237">
    <property type="entry name" value="Myelin_PLP_CS"/>
</dbReference>
<dbReference type="PANTHER" id="PTHR11683">
    <property type="entry name" value="MYELIN PROTEOLIPID"/>
    <property type="match status" value="1"/>
</dbReference>
<dbReference type="PANTHER" id="PTHR11683:SF4">
    <property type="entry name" value="NEURONAL MEMBRANE GLYCOPROTEIN M6-A"/>
    <property type="match status" value="1"/>
</dbReference>
<dbReference type="Pfam" id="PF01275">
    <property type="entry name" value="Myelin_PLP"/>
    <property type="match status" value="1"/>
</dbReference>
<dbReference type="PRINTS" id="PR00214">
    <property type="entry name" value="MYELINPLP"/>
</dbReference>
<dbReference type="SMART" id="SM00002">
    <property type="entry name" value="PLP"/>
    <property type="match status" value="1"/>
</dbReference>
<dbReference type="PROSITE" id="PS00575">
    <property type="entry name" value="MYELIN_PLP_1"/>
    <property type="match status" value="1"/>
</dbReference>
<dbReference type="PROSITE" id="PS01004">
    <property type="entry name" value="MYELIN_PLP_2"/>
    <property type="match status" value="1"/>
</dbReference>
<name>GPM6A_BOVIN</name>
<proteinExistence type="evidence at transcript level"/>
<protein>
    <recommendedName>
        <fullName>Neuronal membrane glycoprotein M6-a</fullName>
        <shortName>M6a</shortName>
    </recommendedName>
</protein>
<comment type="function">
    <text evidence="1">Involved in neuronal differentiation, including differentiation and migration of neuronal stem cells. Plays a role in neuronal plasticity and is involved in neurite and filopodia outgrowth, filopodia motility and probably synapse formation. GPM6A-induced filopodia formation involves mitogen-activated protein kinase (MAPK) and Src signaling pathways. May be involved in neuronal NGF-dependent Ca(2+) influx. May be involved in regulation of endocytosis and intracellular trafficking of G-protein-coupled receptors (GPCRs); may enhance internalization and recycling of mu-type opioid receptor (By similarity).</text>
</comment>
<comment type="subunit">
    <text evidence="3 4">Interacts with OPRM1 (By similarity). Interacts with palmitoyltransferase ZDHHC17/HIP14; the interaction leads to palmitoylation of GPM6A (By similarity).</text>
</comment>
<comment type="subcellular location">
    <subcellularLocation>
        <location evidence="2">Cell membrane</location>
        <topology evidence="2">Multi-pass membrane protein</topology>
    </subcellularLocation>
    <subcellularLocation>
        <location evidence="2">Cell projection</location>
        <location evidence="2">Axon</location>
    </subcellularLocation>
    <subcellularLocation>
        <location evidence="2">Cell projection</location>
        <location evidence="2">Growth cone</location>
    </subcellularLocation>
    <subcellularLocation>
        <location evidence="4">Cell projection</location>
        <location evidence="4">Dendritic spine</location>
    </subcellularLocation>
    <subcellularLocation>
        <location evidence="4">Cell projection</location>
        <location evidence="4">Filopodium</location>
    </subcellularLocation>
    <subcellularLocation>
        <location evidence="4">Cell projection</location>
        <location evidence="4">Neuron projection</location>
    </subcellularLocation>
    <text evidence="2 4">Localizes to cholesterol-rich lipid rafts of the plasma membrane of hippocampal neurons. Localized to plasma membrane of cell bodies and neurites of hippocampal neurons. Localized in membrane protrusions (filopodia and spines) of primary hippocampal neurons (By similarity). Localized to the growth cone edge membrane of elongating axons (By similarity).</text>
</comment>
<comment type="PTM">
    <text evidence="3">N-glycosylated.</text>
</comment>
<comment type="PTM">
    <text evidence="3">Palmitoylated by ZDHHC17/HIP14.</text>
</comment>
<comment type="similarity">
    <text evidence="6">Belongs to the myelin proteolipid protein family.</text>
</comment>